<sequence length="620" mass="67364">MSLDIKKYPTLVLADNPMELRQLPKESLVALCDELRQFLLDSVSRSSGHFASGLGTVELTVALHYVYNTPFDRLIWDVGHQAYPHKILTGRRDRIATIRQRNGLHPFPWRGESEYDQLSVGHSSTSISAGLGMAVAAEHEGLGRRTVCVIGDGAITAGMAFEAMNHAGDIKSDLLVVLNDNEMSISENVGALNNHLAQILSGKLYSTLREGGKKVLSGIPPIKELVKRTEEHIKGMVVPGTLFEELGFNYIGPVDGHDVQGLVQTLKNMRAKKGPQLLHIMTKKGRGYAPAEKDPISWHAVPKFDPHMGTLPKSGDGCPTYSAIFGDWLCATAADDDKLMAITPAMREGSGMVAFSRQYPRQYFDVAIAEQHAVTFAAGLAIGGYHPVVAIYSTFLQRAYDQVIHDVAIQNLPVLFAIDRGGVVGADGQTHQGAFDLSYLRCIPNMVIMTPSDENECRLMLHTGYHYQAGPSTVRYPRGNSTGAPLTDLHELPLGKGVVHRQGAGVAILNFGTLLPQAEHAAQAINATLVDMRFVKPLDDTLISELAASHQALVTVEENAIMGGAGSGVNEYVMQQRLQVPVLNIGLPDHFIPQGSQEEIRADLGLDGAGIQRQIKDWLA</sequence>
<keyword id="KW-0414">Isoprene biosynthesis</keyword>
<keyword id="KW-0460">Magnesium</keyword>
<keyword id="KW-0479">Metal-binding</keyword>
<keyword id="KW-0784">Thiamine biosynthesis</keyword>
<keyword id="KW-0786">Thiamine pyrophosphate</keyword>
<keyword id="KW-0808">Transferase</keyword>
<organism>
    <name type="scientific">Sodalis glossinidius (strain morsitans)</name>
    <dbReference type="NCBI Taxonomy" id="343509"/>
    <lineage>
        <taxon>Bacteria</taxon>
        <taxon>Pseudomonadati</taxon>
        <taxon>Pseudomonadota</taxon>
        <taxon>Gammaproteobacteria</taxon>
        <taxon>Enterobacterales</taxon>
        <taxon>Bruguierivoracaceae</taxon>
        <taxon>Sodalis</taxon>
    </lineage>
</organism>
<accession>Q2NV94</accession>
<name>DXS_SODGM</name>
<gene>
    <name evidence="1" type="primary">dxs</name>
    <name type="ordered locus">SG0656</name>
</gene>
<protein>
    <recommendedName>
        <fullName evidence="1">1-deoxy-D-xylulose-5-phosphate synthase</fullName>
        <ecNumber evidence="1">2.2.1.7</ecNumber>
    </recommendedName>
    <alternativeName>
        <fullName evidence="1">1-deoxyxylulose-5-phosphate synthase</fullName>
        <shortName evidence="1">DXP synthase</shortName>
        <shortName evidence="1">DXPS</shortName>
    </alternativeName>
</protein>
<proteinExistence type="inferred from homology"/>
<reference key="1">
    <citation type="journal article" date="2006" name="Genome Res.">
        <title>Massive genome erosion and functional adaptations provide insights into the symbiotic lifestyle of Sodalis glossinidius in the tsetse host.</title>
        <authorList>
            <person name="Toh H."/>
            <person name="Weiss B.L."/>
            <person name="Perkin S.A.H."/>
            <person name="Yamashita A."/>
            <person name="Oshima K."/>
            <person name="Hattori M."/>
            <person name="Aksoy S."/>
        </authorList>
    </citation>
    <scope>NUCLEOTIDE SEQUENCE [LARGE SCALE GENOMIC DNA]</scope>
    <source>
        <strain>morsitans</strain>
    </source>
</reference>
<feature type="chain" id="PRO_0000256488" description="1-deoxy-D-xylulose-5-phosphate synthase">
    <location>
        <begin position="1"/>
        <end position="620"/>
    </location>
</feature>
<feature type="binding site" evidence="1">
    <location>
        <position position="80"/>
    </location>
    <ligand>
        <name>thiamine diphosphate</name>
        <dbReference type="ChEBI" id="CHEBI:58937"/>
    </ligand>
</feature>
<feature type="binding site" evidence="1">
    <location>
        <begin position="121"/>
        <end position="123"/>
    </location>
    <ligand>
        <name>thiamine diphosphate</name>
        <dbReference type="ChEBI" id="CHEBI:58937"/>
    </ligand>
</feature>
<feature type="binding site" evidence="1">
    <location>
        <position position="152"/>
    </location>
    <ligand>
        <name>Mg(2+)</name>
        <dbReference type="ChEBI" id="CHEBI:18420"/>
    </ligand>
</feature>
<feature type="binding site" evidence="1">
    <location>
        <begin position="153"/>
        <end position="154"/>
    </location>
    <ligand>
        <name>thiamine diphosphate</name>
        <dbReference type="ChEBI" id="CHEBI:58937"/>
    </ligand>
</feature>
<feature type="binding site" evidence="1">
    <location>
        <position position="181"/>
    </location>
    <ligand>
        <name>Mg(2+)</name>
        <dbReference type="ChEBI" id="CHEBI:18420"/>
    </ligand>
</feature>
<feature type="binding site" evidence="1">
    <location>
        <position position="181"/>
    </location>
    <ligand>
        <name>thiamine diphosphate</name>
        <dbReference type="ChEBI" id="CHEBI:58937"/>
    </ligand>
</feature>
<feature type="binding site" evidence="1">
    <location>
        <position position="288"/>
    </location>
    <ligand>
        <name>thiamine diphosphate</name>
        <dbReference type="ChEBI" id="CHEBI:58937"/>
    </ligand>
</feature>
<feature type="binding site" evidence="1">
    <location>
        <position position="370"/>
    </location>
    <ligand>
        <name>thiamine diphosphate</name>
        <dbReference type="ChEBI" id="CHEBI:58937"/>
    </ligand>
</feature>
<dbReference type="EC" id="2.2.1.7" evidence="1"/>
<dbReference type="EMBL" id="AP008232">
    <property type="protein sequence ID" value="BAE73931.1"/>
    <property type="molecule type" value="Genomic_DNA"/>
</dbReference>
<dbReference type="RefSeq" id="WP_011410409.1">
    <property type="nucleotide sequence ID" value="NC_007712.1"/>
</dbReference>
<dbReference type="SMR" id="Q2NV94"/>
<dbReference type="STRING" id="343509.SG0656"/>
<dbReference type="KEGG" id="sgl:SG0656"/>
<dbReference type="eggNOG" id="COG1154">
    <property type="taxonomic scope" value="Bacteria"/>
</dbReference>
<dbReference type="HOGENOM" id="CLU_009227_1_4_6"/>
<dbReference type="OrthoDB" id="9803371at2"/>
<dbReference type="BioCyc" id="SGLO343509:SGP1_RS05680-MONOMER"/>
<dbReference type="UniPathway" id="UPA00064">
    <property type="reaction ID" value="UER00091"/>
</dbReference>
<dbReference type="Proteomes" id="UP000001932">
    <property type="component" value="Chromosome"/>
</dbReference>
<dbReference type="GO" id="GO:0005829">
    <property type="term" value="C:cytosol"/>
    <property type="evidence" value="ECO:0007669"/>
    <property type="project" value="TreeGrafter"/>
</dbReference>
<dbReference type="GO" id="GO:0008661">
    <property type="term" value="F:1-deoxy-D-xylulose-5-phosphate synthase activity"/>
    <property type="evidence" value="ECO:0007669"/>
    <property type="project" value="UniProtKB-UniRule"/>
</dbReference>
<dbReference type="GO" id="GO:0000287">
    <property type="term" value="F:magnesium ion binding"/>
    <property type="evidence" value="ECO:0007669"/>
    <property type="project" value="UniProtKB-UniRule"/>
</dbReference>
<dbReference type="GO" id="GO:0030976">
    <property type="term" value="F:thiamine pyrophosphate binding"/>
    <property type="evidence" value="ECO:0007669"/>
    <property type="project" value="UniProtKB-UniRule"/>
</dbReference>
<dbReference type="GO" id="GO:0052865">
    <property type="term" value="P:1-deoxy-D-xylulose 5-phosphate biosynthetic process"/>
    <property type="evidence" value="ECO:0007669"/>
    <property type="project" value="UniProtKB-UniPathway"/>
</dbReference>
<dbReference type="GO" id="GO:0019288">
    <property type="term" value="P:isopentenyl diphosphate biosynthetic process, methylerythritol 4-phosphate pathway"/>
    <property type="evidence" value="ECO:0007669"/>
    <property type="project" value="TreeGrafter"/>
</dbReference>
<dbReference type="GO" id="GO:0016114">
    <property type="term" value="P:terpenoid biosynthetic process"/>
    <property type="evidence" value="ECO:0007669"/>
    <property type="project" value="UniProtKB-UniRule"/>
</dbReference>
<dbReference type="GO" id="GO:0009228">
    <property type="term" value="P:thiamine biosynthetic process"/>
    <property type="evidence" value="ECO:0007669"/>
    <property type="project" value="UniProtKB-UniRule"/>
</dbReference>
<dbReference type="CDD" id="cd02007">
    <property type="entry name" value="TPP_DXS"/>
    <property type="match status" value="1"/>
</dbReference>
<dbReference type="CDD" id="cd07033">
    <property type="entry name" value="TPP_PYR_DXS_TK_like"/>
    <property type="match status" value="1"/>
</dbReference>
<dbReference type="FunFam" id="3.40.50.920:FF:000002">
    <property type="entry name" value="1-deoxy-D-xylulose-5-phosphate synthase"/>
    <property type="match status" value="1"/>
</dbReference>
<dbReference type="FunFam" id="3.40.50.970:FF:000005">
    <property type="entry name" value="1-deoxy-D-xylulose-5-phosphate synthase"/>
    <property type="match status" value="1"/>
</dbReference>
<dbReference type="Gene3D" id="3.40.50.920">
    <property type="match status" value="1"/>
</dbReference>
<dbReference type="Gene3D" id="3.40.50.970">
    <property type="match status" value="2"/>
</dbReference>
<dbReference type="HAMAP" id="MF_00315">
    <property type="entry name" value="DXP_synth"/>
    <property type="match status" value="1"/>
</dbReference>
<dbReference type="InterPro" id="IPR005477">
    <property type="entry name" value="Dxylulose-5-P_synthase"/>
</dbReference>
<dbReference type="InterPro" id="IPR029061">
    <property type="entry name" value="THDP-binding"/>
</dbReference>
<dbReference type="InterPro" id="IPR009014">
    <property type="entry name" value="Transketo_C/PFOR_II"/>
</dbReference>
<dbReference type="InterPro" id="IPR005475">
    <property type="entry name" value="Transketolase-like_Pyr-bd"/>
</dbReference>
<dbReference type="InterPro" id="IPR020826">
    <property type="entry name" value="Transketolase_BS"/>
</dbReference>
<dbReference type="InterPro" id="IPR033248">
    <property type="entry name" value="Transketolase_C"/>
</dbReference>
<dbReference type="InterPro" id="IPR049557">
    <property type="entry name" value="Transketolase_CS"/>
</dbReference>
<dbReference type="NCBIfam" id="TIGR00204">
    <property type="entry name" value="dxs"/>
    <property type="match status" value="1"/>
</dbReference>
<dbReference type="NCBIfam" id="NF003933">
    <property type="entry name" value="PRK05444.2-2"/>
    <property type="match status" value="1"/>
</dbReference>
<dbReference type="PANTHER" id="PTHR43322">
    <property type="entry name" value="1-D-DEOXYXYLULOSE 5-PHOSPHATE SYNTHASE-RELATED"/>
    <property type="match status" value="1"/>
</dbReference>
<dbReference type="PANTHER" id="PTHR43322:SF5">
    <property type="entry name" value="1-DEOXY-D-XYLULOSE-5-PHOSPHATE SYNTHASE, CHLOROPLASTIC"/>
    <property type="match status" value="1"/>
</dbReference>
<dbReference type="Pfam" id="PF13292">
    <property type="entry name" value="DXP_synthase_N"/>
    <property type="match status" value="1"/>
</dbReference>
<dbReference type="Pfam" id="PF02779">
    <property type="entry name" value="Transket_pyr"/>
    <property type="match status" value="1"/>
</dbReference>
<dbReference type="Pfam" id="PF02780">
    <property type="entry name" value="Transketolase_C"/>
    <property type="match status" value="1"/>
</dbReference>
<dbReference type="SMART" id="SM00861">
    <property type="entry name" value="Transket_pyr"/>
    <property type="match status" value="1"/>
</dbReference>
<dbReference type="SUPFAM" id="SSF52518">
    <property type="entry name" value="Thiamin diphosphate-binding fold (THDP-binding)"/>
    <property type="match status" value="2"/>
</dbReference>
<dbReference type="SUPFAM" id="SSF52922">
    <property type="entry name" value="TK C-terminal domain-like"/>
    <property type="match status" value="1"/>
</dbReference>
<dbReference type="PROSITE" id="PS00801">
    <property type="entry name" value="TRANSKETOLASE_1"/>
    <property type="match status" value="1"/>
</dbReference>
<dbReference type="PROSITE" id="PS00802">
    <property type="entry name" value="TRANSKETOLASE_2"/>
    <property type="match status" value="1"/>
</dbReference>
<comment type="function">
    <text evidence="1">Catalyzes the acyloin condensation reaction between C atoms 2 and 3 of pyruvate and glyceraldehyde 3-phosphate to yield 1-deoxy-D-xylulose-5-phosphate (DXP).</text>
</comment>
<comment type="catalytic activity">
    <reaction evidence="1">
        <text>D-glyceraldehyde 3-phosphate + pyruvate + H(+) = 1-deoxy-D-xylulose 5-phosphate + CO2</text>
        <dbReference type="Rhea" id="RHEA:12605"/>
        <dbReference type="ChEBI" id="CHEBI:15361"/>
        <dbReference type="ChEBI" id="CHEBI:15378"/>
        <dbReference type="ChEBI" id="CHEBI:16526"/>
        <dbReference type="ChEBI" id="CHEBI:57792"/>
        <dbReference type="ChEBI" id="CHEBI:59776"/>
        <dbReference type="EC" id="2.2.1.7"/>
    </reaction>
</comment>
<comment type="cofactor">
    <cofactor evidence="1">
        <name>Mg(2+)</name>
        <dbReference type="ChEBI" id="CHEBI:18420"/>
    </cofactor>
    <text evidence="1">Binds 1 Mg(2+) ion per subunit.</text>
</comment>
<comment type="cofactor">
    <cofactor evidence="1">
        <name>thiamine diphosphate</name>
        <dbReference type="ChEBI" id="CHEBI:58937"/>
    </cofactor>
    <text evidence="1">Binds 1 thiamine pyrophosphate per subunit.</text>
</comment>
<comment type="pathway">
    <text evidence="1">Metabolic intermediate biosynthesis; 1-deoxy-D-xylulose 5-phosphate biosynthesis; 1-deoxy-D-xylulose 5-phosphate from D-glyceraldehyde 3-phosphate and pyruvate: step 1/1.</text>
</comment>
<comment type="subunit">
    <text evidence="1">Homodimer.</text>
</comment>
<comment type="similarity">
    <text evidence="1">Belongs to the transketolase family. DXPS subfamily.</text>
</comment>
<evidence type="ECO:0000255" key="1">
    <source>
        <dbReference type="HAMAP-Rule" id="MF_00315"/>
    </source>
</evidence>